<name>BIOZ_RHOM4</name>
<proteinExistence type="evidence at protein level"/>
<accession>D0MCQ4</accession>
<evidence type="ECO:0000250" key="1">
    <source>
        <dbReference type="UniProtKB" id="P0A6R0"/>
    </source>
</evidence>
<evidence type="ECO:0000250" key="2">
    <source>
        <dbReference type="UniProtKB" id="Q7CTU0"/>
    </source>
</evidence>
<evidence type="ECO:0000255" key="3">
    <source>
        <dbReference type="HAMAP-Rule" id="MF_02249"/>
    </source>
</evidence>
<evidence type="ECO:0000269" key="4">
    <source>
    </source>
</evidence>
<evidence type="ECO:0000305" key="5"/>
<evidence type="ECO:0000312" key="6">
    <source>
        <dbReference type="EMBL" id="ACY47014.1"/>
    </source>
</evidence>
<protein>
    <recommendedName>
        <fullName evidence="3 5">3-oxopimeloyl-[acyl-carrier-protein] synthase</fullName>
        <shortName evidence="3 5">3-oxopimeloyl-[ACP] synthase</shortName>
        <ecNumber evidence="3 4">2.3.1.-</ecNumber>
    </recommendedName>
</protein>
<feature type="chain" id="PRO_0000453633" description="3-oxopimeloyl-[acyl-carrier-protein] synthase">
    <location>
        <begin position="1"/>
        <end position="343"/>
    </location>
</feature>
<feature type="region of interest" description="ACP-binding" evidence="1 3">
    <location>
        <begin position="273"/>
        <end position="277"/>
    </location>
</feature>
<feature type="active site" evidence="2 3">
    <location>
        <position position="132"/>
    </location>
</feature>
<feature type="active site" evidence="2 3">
    <location>
        <position position="272"/>
    </location>
</feature>
<feature type="active site" evidence="2 3">
    <location>
        <position position="302"/>
    </location>
</feature>
<organism>
    <name type="scientific">Rhodothermus marinus (strain ATCC 43812 / DSM 4252 / R-10)</name>
    <name type="common">Rhodothermus obamensis</name>
    <dbReference type="NCBI Taxonomy" id="518766"/>
    <lineage>
        <taxon>Bacteria</taxon>
        <taxon>Pseudomonadati</taxon>
        <taxon>Rhodothermota</taxon>
        <taxon>Rhodothermia</taxon>
        <taxon>Rhodothermales</taxon>
        <taxon>Rhodothermaceae</taxon>
        <taxon>Rhodothermus</taxon>
    </lineage>
</organism>
<reference key="1">
    <citation type="journal article" date="2009" name="Stand. Genomic Sci.">
        <title>Complete genome sequence of Rhodothermus marinus type strain (R-10).</title>
        <authorList>
            <person name="Nolan M."/>
            <person name="Tindall B.J."/>
            <person name="Pomrenke H."/>
            <person name="Lapidus A."/>
            <person name="Copeland A."/>
            <person name="Glavina Del Rio T."/>
            <person name="Lucas S."/>
            <person name="Chen F."/>
            <person name="Tice H."/>
            <person name="Cheng J.F."/>
            <person name="Saunders E."/>
            <person name="Han C."/>
            <person name="Bruce D."/>
            <person name="Goodwin L."/>
            <person name="Chain P."/>
            <person name="Pitluck S."/>
            <person name="Ovchinikova G."/>
            <person name="Pati A."/>
            <person name="Ivanova N."/>
            <person name="Mavromatis K."/>
            <person name="Chen A."/>
            <person name="Palaniappan K."/>
            <person name="Land M."/>
            <person name="Hauser L."/>
            <person name="Chang Y.J."/>
            <person name="Jeffries C.D."/>
            <person name="Brettin T."/>
            <person name="Goker M."/>
            <person name="Bristow J."/>
            <person name="Eisen J.A."/>
            <person name="Markowitz V."/>
            <person name="Hugenholtz P."/>
            <person name="Kyrpides N.C."/>
            <person name="Klenk H.P."/>
            <person name="Detter J.C."/>
        </authorList>
    </citation>
    <scope>NUCLEOTIDE SEQUENCE [LARGE SCALE GENOMIC DNA]</scope>
    <source>
        <strain>ATCC 43812 / DSM 4252 / R-10</strain>
    </source>
</reference>
<reference key="2">
    <citation type="journal article" date="2020" name="Nat. Commun.">
        <title>Alpha-proteobacteria synthesize biotin precursor pimeloyl-ACP using BioZ 3-ketoacyl-ACP synthase and lysine catabolism.</title>
        <authorList>
            <person name="Hu Y."/>
            <person name="Cronan J.E."/>
        </authorList>
    </citation>
    <scope>FUNCTION</scope>
    <scope>CATALYTIC ACTIVITY</scope>
    <scope>PATHWAY</scope>
</reference>
<keyword id="KW-0012">Acyltransferase</keyword>
<keyword id="KW-0093">Biotin biosynthesis</keyword>
<keyword id="KW-1185">Reference proteome</keyword>
<keyword id="KW-0808">Transferase</keyword>
<dbReference type="EC" id="2.3.1.-" evidence="3 4"/>
<dbReference type="EMBL" id="CP001807">
    <property type="protein sequence ID" value="ACY47014.1"/>
    <property type="molecule type" value="Genomic_DNA"/>
</dbReference>
<dbReference type="RefSeq" id="WP_012842626.1">
    <property type="nucleotide sequence ID" value="NC_013501.1"/>
</dbReference>
<dbReference type="SMR" id="D0MCQ4"/>
<dbReference type="STRING" id="518766.Rmar_0105"/>
<dbReference type="KEGG" id="rmr:Rmar_0105"/>
<dbReference type="eggNOG" id="COG0332">
    <property type="taxonomic scope" value="Bacteria"/>
</dbReference>
<dbReference type="HOGENOM" id="CLU_039592_4_2_10"/>
<dbReference type="OrthoDB" id="9815506at2"/>
<dbReference type="UniPathway" id="UPA00078"/>
<dbReference type="Proteomes" id="UP000002221">
    <property type="component" value="Chromosome"/>
</dbReference>
<dbReference type="GO" id="GO:0004315">
    <property type="term" value="F:3-oxoacyl-[acyl-carrier-protein] synthase activity"/>
    <property type="evidence" value="ECO:0007669"/>
    <property type="project" value="UniProtKB-EC"/>
</dbReference>
<dbReference type="GO" id="GO:0009102">
    <property type="term" value="P:biotin biosynthetic process"/>
    <property type="evidence" value="ECO:0007669"/>
    <property type="project" value="UniProtKB-UniPathway"/>
</dbReference>
<dbReference type="GO" id="GO:0006633">
    <property type="term" value="P:fatty acid biosynthetic process"/>
    <property type="evidence" value="ECO:0007669"/>
    <property type="project" value="InterPro"/>
</dbReference>
<dbReference type="GO" id="GO:0044550">
    <property type="term" value="P:secondary metabolite biosynthetic process"/>
    <property type="evidence" value="ECO:0007669"/>
    <property type="project" value="TreeGrafter"/>
</dbReference>
<dbReference type="CDD" id="cd00830">
    <property type="entry name" value="KAS_III"/>
    <property type="match status" value="1"/>
</dbReference>
<dbReference type="Gene3D" id="3.40.47.10">
    <property type="match status" value="1"/>
</dbReference>
<dbReference type="HAMAP" id="MF_02249">
    <property type="entry name" value="BioZ"/>
    <property type="match status" value="1"/>
</dbReference>
<dbReference type="InterPro" id="IPR013747">
    <property type="entry name" value="ACP_syn_III_C"/>
</dbReference>
<dbReference type="InterPro" id="IPR013751">
    <property type="entry name" value="ACP_syn_III_N"/>
</dbReference>
<dbReference type="InterPro" id="IPR046403">
    <property type="entry name" value="BioZ"/>
</dbReference>
<dbReference type="InterPro" id="IPR016039">
    <property type="entry name" value="Thiolase-like"/>
</dbReference>
<dbReference type="NCBIfam" id="NF006829">
    <property type="entry name" value="PRK09352.1"/>
    <property type="match status" value="1"/>
</dbReference>
<dbReference type="PANTHER" id="PTHR34069">
    <property type="entry name" value="3-OXOACYL-[ACYL-CARRIER-PROTEIN] SYNTHASE 3"/>
    <property type="match status" value="1"/>
</dbReference>
<dbReference type="PANTHER" id="PTHR34069:SF2">
    <property type="entry name" value="BETA-KETOACYL-[ACYL-CARRIER-PROTEIN] SYNTHASE III"/>
    <property type="match status" value="1"/>
</dbReference>
<dbReference type="Pfam" id="PF08545">
    <property type="entry name" value="ACP_syn_III"/>
    <property type="match status" value="1"/>
</dbReference>
<dbReference type="Pfam" id="PF08541">
    <property type="entry name" value="ACP_syn_III_C"/>
    <property type="match status" value="1"/>
</dbReference>
<dbReference type="SUPFAM" id="SSF53901">
    <property type="entry name" value="Thiolase-like"/>
    <property type="match status" value="1"/>
</dbReference>
<gene>
    <name evidence="3" type="primary">bioZ</name>
    <name evidence="6" type="ordered locus">Rmar_0105</name>
</gene>
<comment type="function">
    <text evidence="4">Involved in the formation of the biotin precursor pimeloyl-ACP (PubMed:33154364). Catalyzes the condensation of glutaryl-CoA, an intermediate in lysine degradation, with malonyl-ACP to produce 3-oxopimeloyl-ACP (PubMed:33154364).</text>
</comment>
<comment type="catalytic activity">
    <reaction evidence="3 4">
        <text>malonyl-[ACP] + an acyl-CoA + H(+) = a 3-oxoacyl-[ACP] + CO2 + CoA</text>
        <dbReference type="Rhea" id="RHEA:44448"/>
        <dbReference type="Rhea" id="RHEA-COMP:9623"/>
        <dbReference type="Rhea" id="RHEA-COMP:9916"/>
        <dbReference type="ChEBI" id="CHEBI:15378"/>
        <dbReference type="ChEBI" id="CHEBI:16526"/>
        <dbReference type="ChEBI" id="CHEBI:57287"/>
        <dbReference type="ChEBI" id="CHEBI:58342"/>
        <dbReference type="ChEBI" id="CHEBI:78449"/>
        <dbReference type="ChEBI" id="CHEBI:78776"/>
    </reaction>
</comment>
<comment type="catalytic activity">
    <reaction evidence="3 4">
        <text>glutaryl-CoA + malonyl-[ACP] + H(+) = 3-oxo-6-carboxyhexanoyl-[ACP] + CO2 + CoA</text>
        <dbReference type="Rhea" id="RHEA:67904"/>
        <dbReference type="Rhea" id="RHEA-COMP:9623"/>
        <dbReference type="Rhea" id="RHEA-COMP:17387"/>
        <dbReference type="ChEBI" id="CHEBI:15378"/>
        <dbReference type="ChEBI" id="CHEBI:16526"/>
        <dbReference type="ChEBI" id="CHEBI:57287"/>
        <dbReference type="ChEBI" id="CHEBI:57378"/>
        <dbReference type="ChEBI" id="CHEBI:78449"/>
        <dbReference type="ChEBI" id="CHEBI:176519"/>
    </reaction>
</comment>
<comment type="pathway">
    <text evidence="3 4">Cofactor biosynthesis; biotin biosynthesis.</text>
</comment>
<comment type="similarity">
    <text evidence="3 5">Belongs to the thiolase-like superfamily. BioZ family.</text>
</comment>
<sequence length="343" mass="36075">MLPEQSLTTPLPATATAAPARRAAVLGVGAALPAHREPSTETERRLGLPPGWIARRTGIRERPLVGPDEATSDLAVRAGAAALAQAELSPERIGLLLLATSTPDHLLPPTAPVVAHRLGLKHAGAVDLAGACSGFLYALALADGYVRLQRTCVLVIGANVLSRRTNPDDPKTSALFADGAGAVVLGPSEGSRGIVACWLGADGSCWDDLYIPAGGSRRPLTPERVARGEHLMYMKDGRALFRRAATGMAEAGRRVLQQAGLDLDDVAWWIPHQANHRLIEEARRQLGMPEARTVNLVDRIGNSSAATIPLALALEAHRFAPGDLLLLTAVGAGLLSAAVLIQW</sequence>